<dbReference type="EMBL" id="CP001336">
    <property type="protein sequence ID" value="ACL18485.1"/>
    <property type="molecule type" value="Genomic_DNA"/>
</dbReference>
<dbReference type="RefSeq" id="WP_015942751.1">
    <property type="nucleotide sequence ID" value="NC_011830.1"/>
</dbReference>
<dbReference type="SMR" id="B8G1W2"/>
<dbReference type="KEGG" id="dhd:Dhaf_0418"/>
<dbReference type="HOGENOM" id="CLU_072226_1_1_9"/>
<dbReference type="Proteomes" id="UP000007726">
    <property type="component" value="Chromosome"/>
</dbReference>
<dbReference type="GO" id="GO:0015935">
    <property type="term" value="C:small ribosomal subunit"/>
    <property type="evidence" value="ECO:0007669"/>
    <property type="project" value="InterPro"/>
</dbReference>
<dbReference type="GO" id="GO:0019843">
    <property type="term" value="F:rRNA binding"/>
    <property type="evidence" value="ECO:0007669"/>
    <property type="project" value="UniProtKB-UniRule"/>
</dbReference>
<dbReference type="GO" id="GO:0003735">
    <property type="term" value="F:structural constituent of ribosome"/>
    <property type="evidence" value="ECO:0007669"/>
    <property type="project" value="InterPro"/>
</dbReference>
<dbReference type="GO" id="GO:0000049">
    <property type="term" value="F:tRNA binding"/>
    <property type="evidence" value="ECO:0007669"/>
    <property type="project" value="UniProtKB-UniRule"/>
</dbReference>
<dbReference type="GO" id="GO:0006412">
    <property type="term" value="P:translation"/>
    <property type="evidence" value="ECO:0007669"/>
    <property type="project" value="UniProtKB-UniRule"/>
</dbReference>
<dbReference type="CDD" id="cd14869">
    <property type="entry name" value="uS7_Bacteria"/>
    <property type="match status" value="1"/>
</dbReference>
<dbReference type="FunFam" id="1.10.455.10:FF:000001">
    <property type="entry name" value="30S ribosomal protein S7"/>
    <property type="match status" value="1"/>
</dbReference>
<dbReference type="Gene3D" id="1.10.455.10">
    <property type="entry name" value="Ribosomal protein S7 domain"/>
    <property type="match status" value="1"/>
</dbReference>
<dbReference type="HAMAP" id="MF_00480_B">
    <property type="entry name" value="Ribosomal_uS7_B"/>
    <property type="match status" value="1"/>
</dbReference>
<dbReference type="InterPro" id="IPR000235">
    <property type="entry name" value="Ribosomal_uS7"/>
</dbReference>
<dbReference type="InterPro" id="IPR005717">
    <property type="entry name" value="Ribosomal_uS7_bac/org-type"/>
</dbReference>
<dbReference type="InterPro" id="IPR020606">
    <property type="entry name" value="Ribosomal_uS7_CS"/>
</dbReference>
<dbReference type="InterPro" id="IPR023798">
    <property type="entry name" value="Ribosomal_uS7_dom"/>
</dbReference>
<dbReference type="InterPro" id="IPR036823">
    <property type="entry name" value="Ribosomal_uS7_dom_sf"/>
</dbReference>
<dbReference type="NCBIfam" id="TIGR01029">
    <property type="entry name" value="rpsG_bact"/>
    <property type="match status" value="1"/>
</dbReference>
<dbReference type="PANTHER" id="PTHR11205">
    <property type="entry name" value="RIBOSOMAL PROTEIN S7"/>
    <property type="match status" value="1"/>
</dbReference>
<dbReference type="Pfam" id="PF00177">
    <property type="entry name" value="Ribosomal_S7"/>
    <property type="match status" value="1"/>
</dbReference>
<dbReference type="PIRSF" id="PIRSF002122">
    <property type="entry name" value="RPS7p_RPS7a_RPS5e_RPS7o"/>
    <property type="match status" value="1"/>
</dbReference>
<dbReference type="SUPFAM" id="SSF47973">
    <property type="entry name" value="Ribosomal protein S7"/>
    <property type="match status" value="1"/>
</dbReference>
<dbReference type="PROSITE" id="PS00052">
    <property type="entry name" value="RIBOSOMAL_S7"/>
    <property type="match status" value="1"/>
</dbReference>
<evidence type="ECO:0000255" key="1">
    <source>
        <dbReference type="HAMAP-Rule" id="MF_00480"/>
    </source>
</evidence>
<evidence type="ECO:0000305" key="2"/>
<proteinExistence type="inferred from homology"/>
<comment type="function">
    <text evidence="1">One of the primary rRNA binding proteins, it binds directly to 16S rRNA where it nucleates assembly of the head domain of the 30S subunit. Is located at the subunit interface close to the decoding center, probably blocks exit of the E-site tRNA.</text>
</comment>
<comment type="subunit">
    <text evidence="1">Part of the 30S ribosomal subunit. Contacts proteins S9 and S11.</text>
</comment>
<comment type="similarity">
    <text evidence="1">Belongs to the universal ribosomal protein uS7 family.</text>
</comment>
<gene>
    <name evidence="1" type="primary">rpsG</name>
    <name type="ordered locus">Dhaf_0418</name>
</gene>
<accession>B8G1W2</accession>
<organism>
    <name type="scientific">Desulfitobacterium hafniense (strain DSM 10664 / DCB-2)</name>
    <dbReference type="NCBI Taxonomy" id="272564"/>
    <lineage>
        <taxon>Bacteria</taxon>
        <taxon>Bacillati</taxon>
        <taxon>Bacillota</taxon>
        <taxon>Clostridia</taxon>
        <taxon>Eubacteriales</taxon>
        <taxon>Desulfitobacteriaceae</taxon>
        <taxon>Desulfitobacterium</taxon>
    </lineage>
</organism>
<reference key="1">
    <citation type="journal article" date="2012" name="BMC Microbiol.">
        <title>Genome sequence of Desulfitobacterium hafniense DCB-2, a Gram-positive anaerobe capable of dehalogenation and metal reduction.</title>
        <authorList>
            <person name="Kim S.H."/>
            <person name="Harzman C."/>
            <person name="Davis J.K."/>
            <person name="Hutcheson R."/>
            <person name="Broderick J.B."/>
            <person name="Marsh T.L."/>
            <person name="Tiedje J.M."/>
        </authorList>
    </citation>
    <scope>NUCLEOTIDE SEQUENCE [LARGE SCALE GENOMIC DNA]</scope>
    <source>
        <strain>DSM 10664 / DCB-2</strain>
    </source>
</reference>
<protein>
    <recommendedName>
        <fullName evidence="1">Small ribosomal subunit protein uS7</fullName>
    </recommendedName>
    <alternativeName>
        <fullName evidence="2">30S ribosomal protein S7</fullName>
    </alternativeName>
</protein>
<name>RS7_DESHD</name>
<keyword id="KW-0687">Ribonucleoprotein</keyword>
<keyword id="KW-0689">Ribosomal protein</keyword>
<keyword id="KW-0694">RNA-binding</keyword>
<keyword id="KW-0699">rRNA-binding</keyword>
<keyword id="KW-0820">tRNA-binding</keyword>
<sequence length="156" mass="17901">MPRKGYIAKREILPDPIYKNRVLTKFINQIMLDGKKGTAESICYNAFELIQEKTGKDPIEVFETALKNVMPVLEVKARRVGGANYQVPIEVRTDRRQTLGLRWLVGYARKRSEKTMEERIAGELMDAANNTGGSIKKKEDTHKMAEANKAFAHYRW</sequence>
<feature type="chain" id="PRO_1000135599" description="Small ribosomal subunit protein uS7">
    <location>
        <begin position="1"/>
        <end position="156"/>
    </location>
</feature>